<comment type="function">
    <text evidence="1">Catalyzes the NADPH-dependent reduction of glutamyl-tRNA(Glu) to glutamate 1-semialdehyde (GSA).</text>
</comment>
<comment type="catalytic activity">
    <reaction evidence="1">
        <text>(S)-4-amino-5-oxopentanoate + tRNA(Glu) + NADP(+) = L-glutamyl-tRNA(Glu) + NADPH + H(+)</text>
        <dbReference type="Rhea" id="RHEA:12344"/>
        <dbReference type="Rhea" id="RHEA-COMP:9663"/>
        <dbReference type="Rhea" id="RHEA-COMP:9680"/>
        <dbReference type="ChEBI" id="CHEBI:15378"/>
        <dbReference type="ChEBI" id="CHEBI:57501"/>
        <dbReference type="ChEBI" id="CHEBI:57783"/>
        <dbReference type="ChEBI" id="CHEBI:58349"/>
        <dbReference type="ChEBI" id="CHEBI:78442"/>
        <dbReference type="ChEBI" id="CHEBI:78520"/>
        <dbReference type="EC" id="1.2.1.70"/>
    </reaction>
</comment>
<comment type="pathway">
    <text evidence="1">Porphyrin-containing compound metabolism; protoporphyrin-IX biosynthesis; 5-aminolevulinate from L-glutamyl-tRNA(Glu): step 1/2.</text>
</comment>
<comment type="subunit">
    <text evidence="1">Homodimer.</text>
</comment>
<comment type="domain">
    <text evidence="1">Possesses an unusual extended V-shaped dimeric structure with each monomer consisting of three distinct domains arranged along a curved 'spinal' alpha-helix. The N-terminal catalytic domain specifically recognizes the glutamate moiety of the substrate. The second domain is the NADPH-binding domain, and the third C-terminal domain is responsible for dimerization.</text>
</comment>
<comment type="miscellaneous">
    <text evidence="1">During catalysis, the active site Cys acts as a nucleophile attacking the alpha-carbonyl group of tRNA-bound glutamate with the formation of a thioester intermediate between enzyme and glutamate, and the concomitant release of tRNA(Glu). The thioester intermediate is finally reduced by direct hydride transfer from NADPH, to form the product GSA.</text>
</comment>
<comment type="similarity">
    <text evidence="1">Belongs to the glutamyl-tRNA reductase family.</text>
</comment>
<gene>
    <name evidence="1" type="primary">hemA</name>
    <name type="ordered locus">BT9727_4199</name>
</gene>
<evidence type="ECO:0000255" key="1">
    <source>
        <dbReference type="HAMAP-Rule" id="MF_00087"/>
    </source>
</evidence>
<organism>
    <name type="scientific">Bacillus thuringiensis subsp. konkukian (strain 97-27)</name>
    <dbReference type="NCBI Taxonomy" id="281309"/>
    <lineage>
        <taxon>Bacteria</taxon>
        <taxon>Bacillati</taxon>
        <taxon>Bacillota</taxon>
        <taxon>Bacilli</taxon>
        <taxon>Bacillales</taxon>
        <taxon>Bacillaceae</taxon>
        <taxon>Bacillus</taxon>
        <taxon>Bacillus cereus group</taxon>
    </lineage>
</organism>
<accession>Q6HD60</accession>
<feature type="chain" id="PRO_0000113993" description="Glutamyl-tRNA reductase">
    <location>
        <begin position="1"/>
        <end position="444"/>
    </location>
</feature>
<feature type="active site" description="Nucleophile" evidence="1">
    <location>
        <position position="50"/>
    </location>
</feature>
<feature type="binding site" evidence="1">
    <location>
        <begin position="49"/>
        <end position="52"/>
    </location>
    <ligand>
        <name>substrate</name>
    </ligand>
</feature>
<feature type="binding site" evidence="1">
    <location>
        <position position="109"/>
    </location>
    <ligand>
        <name>substrate</name>
    </ligand>
</feature>
<feature type="binding site" evidence="1">
    <location>
        <begin position="114"/>
        <end position="116"/>
    </location>
    <ligand>
        <name>substrate</name>
    </ligand>
</feature>
<feature type="binding site" evidence="1">
    <location>
        <position position="120"/>
    </location>
    <ligand>
        <name>substrate</name>
    </ligand>
</feature>
<feature type="binding site" evidence="1">
    <location>
        <begin position="189"/>
        <end position="194"/>
    </location>
    <ligand>
        <name>NADP(+)</name>
        <dbReference type="ChEBI" id="CHEBI:58349"/>
    </ligand>
</feature>
<feature type="site" description="Important for activity" evidence="1">
    <location>
        <position position="99"/>
    </location>
</feature>
<reference key="1">
    <citation type="journal article" date="2006" name="J. Bacteriol.">
        <title>Pathogenomic sequence analysis of Bacillus cereus and Bacillus thuringiensis isolates closely related to Bacillus anthracis.</title>
        <authorList>
            <person name="Han C.S."/>
            <person name="Xie G."/>
            <person name="Challacombe J.F."/>
            <person name="Altherr M.R."/>
            <person name="Bhotika S.S."/>
            <person name="Bruce D."/>
            <person name="Campbell C.S."/>
            <person name="Campbell M.L."/>
            <person name="Chen J."/>
            <person name="Chertkov O."/>
            <person name="Cleland C."/>
            <person name="Dimitrijevic M."/>
            <person name="Doggett N.A."/>
            <person name="Fawcett J.J."/>
            <person name="Glavina T."/>
            <person name="Goodwin L.A."/>
            <person name="Hill K.K."/>
            <person name="Hitchcock P."/>
            <person name="Jackson P.J."/>
            <person name="Keim P."/>
            <person name="Kewalramani A.R."/>
            <person name="Longmire J."/>
            <person name="Lucas S."/>
            <person name="Malfatti S."/>
            <person name="McMurry K."/>
            <person name="Meincke L.J."/>
            <person name="Misra M."/>
            <person name="Moseman B.L."/>
            <person name="Mundt M."/>
            <person name="Munk A.C."/>
            <person name="Okinaka R.T."/>
            <person name="Parson-Quintana B."/>
            <person name="Reilly L.P."/>
            <person name="Richardson P."/>
            <person name="Robinson D.L."/>
            <person name="Rubin E."/>
            <person name="Saunders E."/>
            <person name="Tapia R."/>
            <person name="Tesmer J.G."/>
            <person name="Thayer N."/>
            <person name="Thompson L.S."/>
            <person name="Tice H."/>
            <person name="Ticknor L.O."/>
            <person name="Wills P.L."/>
            <person name="Brettin T.S."/>
            <person name="Gilna P."/>
        </authorList>
    </citation>
    <scope>NUCLEOTIDE SEQUENCE [LARGE SCALE GENOMIC DNA]</scope>
    <source>
        <strain>97-27</strain>
    </source>
</reference>
<protein>
    <recommendedName>
        <fullName evidence="1">Glutamyl-tRNA reductase</fullName>
        <shortName evidence="1">GluTR</shortName>
        <ecNumber evidence="1">1.2.1.70</ecNumber>
    </recommendedName>
</protein>
<name>HEM1_BACHK</name>
<dbReference type="EC" id="1.2.1.70" evidence="1"/>
<dbReference type="EMBL" id="AE017355">
    <property type="protein sequence ID" value="AAT60849.1"/>
    <property type="molecule type" value="Genomic_DNA"/>
</dbReference>
<dbReference type="RefSeq" id="WP_000547860.1">
    <property type="nucleotide sequence ID" value="NC_005957.1"/>
</dbReference>
<dbReference type="RefSeq" id="YP_038516.1">
    <property type="nucleotide sequence ID" value="NC_005957.1"/>
</dbReference>
<dbReference type="SMR" id="Q6HD60"/>
<dbReference type="GeneID" id="45024338"/>
<dbReference type="KEGG" id="btk:BT9727_4199"/>
<dbReference type="PATRIC" id="fig|281309.8.peg.4477"/>
<dbReference type="HOGENOM" id="CLU_035113_2_2_9"/>
<dbReference type="UniPathway" id="UPA00251">
    <property type="reaction ID" value="UER00316"/>
</dbReference>
<dbReference type="Proteomes" id="UP000001301">
    <property type="component" value="Chromosome"/>
</dbReference>
<dbReference type="GO" id="GO:0008883">
    <property type="term" value="F:glutamyl-tRNA reductase activity"/>
    <property type="evidence" value="ECO:0007669"/>
    <property type="project" value="UniProtKB-UniRule"/>
</dbReference>
<dbReference type="GO" id="GO:0050661">
    <property type="term" value="F:NADP binding"/>
    <property type="evidence" value="ECO:0007669"/>
    <property type="project" value="InterPro"/>
</dbReference>
<dbReference type="GO" id="GO:0006782">
    <property type="term" value="P:protoporphyrinogen IX biosynthetic process"/>
    <property type="evidence" value="ECO:0007669"/>
    <property type="project" value="UniProtKB-UniRule"/>
</dbReference>
<dbReference type="CDD" id="cd05213">
    <property type="entry name" value="NAD_bind_Glutamyl_tRNA_reduct"/>
    <property type="match status" value="1"/>
</dbReference>
<dbReference type="FunFam" id="3.30.460.30:FF:000001">
    <property type="entry name" value="Glutamyl-tRNA reductase"/>
    <property type="match status" value="1"/>
</dbReference>
<dbReference type="FunFam" id="3.40.50.720:FF:000031">
    <property type="entry name" value="Glutamyl-tRNA reductase"/>
    <property type="match status" value="1"/>
</dbReference>
<dbReference type="Gene3D" id="3.30.460.30">
    <property type="entry name" value="Glutamyl-tRNA reductase, N-terminal domain"/>
    <property type="match status" value="1"/>
</dbReference>
<dbReference type="Gene3D" id="3.40.50.720">
    <property type="entry name" value="NAD(P)-binding Rossmann-like Domain"/>
    <property type="match status" value="1"/>
</dbReference>
<dbReference type="HAMAP" id="MF_00087">
    <property type="entry name" value="Glu_tRNA_reductase"/>
    <property type="match status" value="1"/>
</dbReference>
<dbReference type="InterPro" id="IPR000343">
    <property type="entry name" value="4pyrrol_synth_GluRdtase"/>
</dbReference>
<dbReference type="InterPro" id="IPR015896">
    <property type="entry name" value="4pyrrol_synth_GluRdtase_dimer"/>
</dbReference>
<dbReference type="InterPro" id="IPR015895">
    <property type="entry name" value="4pyrrol_synth_GluRdtase_N"/>
</dbReference>
<dbReference type="InterPro" id="IPR018214">
    <property type="entry name" value="GluRdtase_CS"/>
</dbReference>
<dbReference type="InterPro" id="IPR036453">
    <property type="entry name" value="GluRdtase_dimer_dom_sf"/>
</dbReference>
<dbReference type="InterPro" id="IPR036343">
    <property type="entry name" value="GluRdtase_N_sf"/>
</dbReference>
<dbReference type="InterPro" id="IPR036291">
    <property type="entry name" value="NAD(P)-bd_dom_sf"/>
</dbReference>
<dbReference type="InterPro" id="IPR006151">
    <property type="entry name" value="Shikm_DH/Glu-tRNA_Rdtase"/>
</dbReference>
<dbReference type="NCBIfam" id="TIGR01035">
    <property type="entry name" value="hemA"/>
    <property type="match status" value="1"/>
</dbReference>
<dbReference type="PANTHER" id="PTHR43120">
    <property type="entry name" value="GLUTAMYL-TRNA REDUCTASE 1, CHLOROPLASTIC"/>
    <property type="match status" value="1"/>
</dbReference>
<dbReference type="PANTHER" id="PTHR43120:SF1">
    <property type="entry name" value="GLUTAMYL-TRNA REDUCTASE 1, CHLOROPLASTIC"/>
    <property type="match status" value="1"/>
</dbReference>
<dbReference type="Pfam" id="PF00745">
    <property type="entry name" value="GlutR_dimer"/>
    <property type="match status" value="1"/>
</dbReference>
<dbReference type="Pfam" id="PF05201">
    <property type="entry name" value="GlutR_N"/>
    <property type="match status" value="1"/>
</dbReference>
<dbReference type="Pfam" id="PF01488">
    <property type="entry name" value="Shikimate_DH"/>
    <property type="match status" value="1"/>
</dbReference>
<dbReference type="PIRSF" id="PIRSF000445">
    <property type="entry name" value="4pyrrol_synth_GluRdtase"/>
    <property type="match status" value="1"/>
</dbReference>
<dbReference type="SUPFAM" id="SSF69742">
    <property type="entry name" value="Glutamyl tRNA-reductase catalytic, N-terminal domain"/>
    <property type="match status" value="1"/>
</dbReference>
<dbReference type="SUPFAM" id="SSF69075">
    <property type="entry name" value="Glutamyl tRNA-reductase dimerization domain"/>
    <property type="match status" value="1"/>
</dbReference>
<dbReference type="SUPFAM" id="SSF51735">
    <property type="entry name" value="NAD(P)-binding Rossmann-fold domains"/>
    <property type="match status" value="1"/>
</dbReference>
<dbReference type="PROSITE" id="PS00747">
    <property type="entry name" value="GLUTR"/>
    <property type="match status" value="1"/>
</dbReference>
<sequence>MHILVVSVNYRTAPVEFREKLTFQAAELERAMTTLQNQKSVLENVIVSTCNRTEIYAVVDQLHTGRYYIKKFLADWFQLEIEEVAPYLTIFEQDGAIDHLFRVTCGLDSMVVGETQILGQIKDSFLEAQQVKATGTIFNELFKQVITLAKRAHSETTIGESAMSVSYAAVELGKKIFGELTDCHVLILGAGKMGELALQNLYGSGARKVTVMNRTLSKAEIMAEKYMGHAKPLSELQCALLEADILISSTGASDYVITKEMMTKVEKMRSGRPLFMVDIAVPRDIDPAIDELEGSFLYDIDDLQGVVEANRAERLKEAEKIQFMIEEEIVLFKTWLSTLGVVPLISALRDKALAIQSETMESLERKIPNLSDRERKVISKHTKSIINQLLKDPILVAKEIAAEEGADEKLALFAKIFDLEMEDVESRAEEVEHKRVWTPSVPSL</sequence>
<proteinExistence type="inferred from homology"/>
<keyword id="KW-0521">NADP</keyword>
<keyword id="KW-0560">Oxidoreductase</keyword>
<keyword id="KW-0627">Porphyrin biosynthesis</keyword>